<name>Y1340_RICBR</name>
<feature type="chain" id="PRO_0000272621" description="Probable ABC transporter permease protein RBE_1340">
    <location>
        <begin position="1"/>
        <end position="259"/>
    </location>
</feature>
<feature type="transmembrane region" description="Helical" evidence="2">
    <location>
        <begin position="25"/>
        <end position="45"/>
    </location>
</feature>
<feature type="transmembrane region" description="Helical" evidence="2">
    <location>
        <begin position="49"/>
        <end position="69"/>
    </location>
</feature>
<feature type="transmembrane region" description="Helical" evidence="2">
    <location>
        <begin position="148"/>
        <end position="168"/>
    </location>
</feature>
<feature type="transmembrane region" description="Helical" evidence="2">
    <location>
        <begin position="195"/>
        <end position="215"/>
    </location>
</feature>
<feature type="transmembrane region" description="Helical" evidence="2">
    <location>
        <begin position="237"/>
        <end position="257"/>
    </location>
</feature>
<accession>Q1RGU3</accession>
<dbReference type="EMBL" id="CP000087">
    <property type="protein sequence ID" value="ABE05421.1"/>
    <property type="molecule type" value="Genomic_DNA"/>
</dbReference>
<dbReference type="RefSeq" id="WP_011477990.1">
    <property type="nucleotide sequence ID" value="NC_007940.1"/>
</dbReference>
<dbReference type="SMR" id="Q1RGU3"/>
<dbReference type="KEGG" id="rbe:RBE_1340"/>
<dbReference type="eggNOG" id="COG0767">
    <property type="taxonomic scope" value="Bacteria"/>
</dbReference>
<dbReference type="HOGENOM" id="CLU_045686_1_1_5"/>
<dbReference type="OrthoDB" id="9806241at2"/>
<dbReference type="Proteomes" id="UP000001951">
    <property type="component" value="Chromosome"/>
</dbReference>
<dbReference type="GO" id="GO:0043190">
    <property type="term" value="C:ATP-binding cassette (ABC) transporter complex"/>
    <property type="evidence" value="ECO:0007669"/>
    <property type="project" value="InterPro"/>
</dbReference>
<dbReference type="GO" id="GO:0005548">
    <property type="term" value="F:phospholipid transporter activity"/>
    <property type="evidence" value="ECO:0007669"/>
    <property type="project" value="TreeGrafter"/>
</dbReference>
<dbReference type="InterPro" id="IPR003453">
    <property type="entry name" value="ABC_MlaE_roteobac"/>
</dbReference>
<dbReference type="InterPro" id="IPR030802">
    <property type="entry name" value="Permease_MalE"/>
</dbReference>
<dbReference type="NCBIfam" id="TIGR00056">
    <property type="entry name" value="MlaE family lipid ABC transporter permease subunit"/>
    <property type="match status" value="1"/>
</dbReference>
<dbReference type="PANTHER" id="PTHR30188">
    <property type="entry name" value="ABC TRANSPORTER PERMEASE PROTEIN-RELATED"/>
    <property type="match status" value="1"/>
</dbReference>
<dbReference type="PANTHER" id="PTHR30188:SF4">
    <property type="entry name" value="PROTEIN TRIGALACTOSYLDIACYLGLYCEROL 1, CHLOROPLASTIC"/>
    <property type="match status" value="1"/>
</dbReference>
<dbReference type="Pfam" id="PF02405">
    <property type="entry name" value="MlaE"/>
    <property type="match status" value="1"/>
</dbReference>
<keyword id="KW-0997">Cell inner membrane</keyword>
<keyword id="KW-1003">Cell membrane</keyword>
<keyword id="KW-0472">Membrane</keyword>
<keyword id="KW-0812">Transmembrane</keyword>
<keyword id="KW-1133">Transmembrane helix</keyword>
<keyword id="KW-0813">Transport</keyword>
<comment type="function">
    <text evidence="1">Could be part of an ABC transporter complex.</text>
</comment>
<comment type="subcellular location">
    <subcellularLocation>
        <location evidence="1">Cell inner membrane</location>
        <topology evidence="1">Multi-pass membrane protein</topology>
    </subcellularLocation>
</comment>
<comment type="similarity">
    <text evidence="3">Belongs to the MlaE permease family.</text>
</comment>
<sequence>MLLNIANSIGKRTIRLAQSIGKFSIFSLAAITSIIRPPLYFSLIIKQLLFIGFYSLPVVAMTTFFSGAVLALQSYTGFSRFSAESSIATVVVLSLTRELGPVLAGLMVAGRVGASIAAEIGTMRVTEQVDALYTLSTDSIKYLVFPKVIAAIITMPCLVLIGDVIGVMGGYLVGVYKLDFNSSTYLTSTFQYLEPIDVISGLVKAGVFGFIISIISCYSGYYSGKGAKGVGRATTSAVVNSSILILISNYLITELFFKV</sequence>
<evidence type="ECO:0000250" key="1"/>
<evidence type="ECO:0000255" key="2"/>
<evidence type="ECO:0000305" key="3"/>
<organism>
    <name type="scientific">Rickettsia bellii (strain RML369-C)</name>
    <dbReference type="NCBI Taxonomy" id="336407"/>
    <lineage>
        <taxon>Bacteria</taxon>
        <taxon>Pseudomonadati</taxon>
        <taxon>Pseudomonadota</taxon>
        <taxon>Alphaproteobacteria</taxon>
        <taxon>Rickettsiales</taxon>
        <taxon>Rickettsiaceae</taxon>
        <taxon>Rickettsieae</taxon>
        <taxon>Rickettsia</taxon>
        <taxon>belli group</taxon>
    </lineage>
</organism>
<proteinExistence type="inferred from homology"/>
<reference key="1">
    <citation type="journal article" date="2006" name="PLoS Genet.">
        <title>Genome sequence of Rickettsia bellii illuminates the role of amoebae in gene exchanges between intracellular pathogens.</title>
        <authorList>
            <person name="Ogata H."/>
            <person name="La Scola B."/>
            <person name="Audic S."/>
            <person name="Renesto P."/>
            <person name="Blanc G."/>
            <person name="Robert C."/>
            <person name="Fournier P.-E."/>
            <person name="Claverie J.-M."/>
            <person name="Raoult D."/>
        </authorList>
    </citation>
    <scope>NUCLEOTIDE SEQUENCE [LARGE SCALE GENOMIC DNA]</scope>
    <source>
        <strain>RML369-C</strain>
    </source>
</reference>
<protein>
    <recommendedName>
        <fullName>Probable ABC transporter permease protein RBE_1340</fullName>
    </recommendedName>
</protein>
<gene>
    <name type="ordered locus">RBE_1340</name>
</gene>